<evidence type="ECO:0000250" key="1"/>
<evidence type="ECO:0000255" key="2"/>
<evidence type="ECO:0000305" key="3"/>
<organism>
    <name type="scientific">Shigella boydii serotype 4 (strain Sb227)</name>
    <dbReference type="NCBI Taxonomy" id="300268"/>
    <lineage>
        <taxon>Bacteria</taxon>
        <taxon>Pseudomonadati</taxon>
        <taxon>Pseudomonadota</taxon>
        <taxon>Gammaproteobacteria</taxon>
        <taxon>Enterobacterales</taxon>
        <taxon>Enterobacteriaceae</taxon>
        <taxon>Shigella</taxon>
    </lineage>
</organism>
<feature type="chain" id="PRO_0000405338" description="Multidrug transporter MdfA">
    <location>
        <begin position="1"/>
        <end position="410"/>
    </location>
</feature>
<feature type="topological domain" description="Cytoplasmic" evidence="2">
    <location>
        <begin position="1"/>
        <end position="15"/>
    </location>
</feature>
<feature type="transmembrane region" description="Helical" evidence="2">
    <location>
        <begin position="16"/>
        <end position="36"/>
    </location>
</feature>
<feature type="topological domain" description="Periplasmic" evidence="2">
    <location>
        <begin position="37"/>
        <end position="52"/>
    </location>
</feature>
<feature type="transmembrane region" description="Helical" evidence="2">
    <location>
        <begin position="53"/>
        <end position="73"/>
    </location>
</feature>
<feature type="topological domain" description="Cytoplasmic" evidence="2">
    <location>
        <begin position="74"/>
        <end position="82"/>
    </location>
</feature>
<feature type="transmembrane region" description="Helical" evidence="2">
    <location>
        <begin position="83"/>
        <end position="103"/>
    </location>
</feature>
<feature type="topological domain" description="Periplasmic" evidence="2">
    <location>
        <begin position="104"/>
        <end position="109"/>
    </location>
</feature>
<feature type="transmembrane region" description="Helical" evidence="2">
    <location>
        <begin position="110"/>
        <end position="130"/>
    </location>
</feature>
<feature type="topological domain" description="Cytoplasmic" evidence="2">
    <location>
        <begin position="131"/>
        <end position="144"/>
    </location>
</feature>
<feature type="transmembrane region" description="Helical" evidence="2">
    <location>
        <begin position="145"/>
        <end position="165"/>
    </location>
</feature>
<feature type="topological domain" description="Periplasmic" evidence="2">
    <location>
        <position position="166"/>
    </location>
</feature>
<feature type="transmembrane region" description="Helical" evidence="2">
    <location>
        <begin position="167"/>
        <end position="187"/>
    </location>
</feature>
<feature type="topological domain" description="Cytoplasmic" evidence="2">
    <location>
        <begin position="188"/>
        <end position="226"/>
    </location>
</feature>
<feature type="transmembrane region" description="Helical" evidence="2">
    <location>
        <begin position="227"/>
        <end position="247"/>
    </location>
</feature>
<feature type="topological domain" description="Periplasmic" evidence="2">
    <location>
        <begin position="248"/>
        <end position="255"/>
    </location>
</feature>
<feature type="transmembrane region" description="Helical" evidence="2">
    <location>
        <begin position="256"/>
        <end position="276"/>
    </location>
</feature>
<feature type="topological domain" description="Cytoplasmic" evidence="2">
    <location>
        <begin position="277"/>
        <end position="287"/>
    </location>
</feature>
<feature type="transmembrane region" description="Helical" evidence="2">
    <location>
        <begin position="288"/>
        <end position="308"/>
    </location>
</feature>
<feature type="topological domain" description="Periplasmic" evidence="2">
    <location>
        <begin position="309"/>
        <end position="314"/>
    </location>
</feature>
<feature type="transmembrane region" description="Helical" evidence="2">
    <location>
        <begin position="315"/>
        <end position="335"/>
    </location>
</feature>
<feature type="topological domain" description="Cytoplasmic" evidence="2">
    <location>
        <begin position="336"/>
        <end position="346"/>
    </location>
</feature>
<feature type="transmembrane region" description="Helical" evidence="2">
    <location>
        <begin position="347"/>
        <end position="367"/>
    </location>
</feature>
<feature type="topological domain" description="Periplasmic" evidence="2">
    <location>
        <begin position="368"/>
        <end position="378"/>
    </location>
</feature>
<feature type="transmembrane region" description="Helical" evidence="2">
    <location>
        <begin position="379"/>
        <end position="399"/>
    </location>
</feature>
<feature type="topological domain" description="Cytoplasmic" evidence="2">
    <location>
        <begin position="400"/>
        <end position="410"/>
    </location>
</feature>
<proteinExistence type="inferred from homology"/>
<sequence length="410" mass="44307">MQNKLASGARLGRQALLFPLCLVLYEFSTYIGADMIQPGMLAVVEQYQAGIDWVPTSMTAYLAGGMFLQWLLGPLSDRIGRRPVMLAGVVWFIITCLAILLAQNIEQFTLLRFLQGISLCFIGAVGYAAIQESFEEAVCIKITALMANVALIAPLLGPLVGAAWIHVLPWEGMFVLFAALAAISFFGLQRAMPETATRIGEKLSLKELGRDYKLVLKNGRFVAGALALGFVSLPLLAWIAQSPIIIITGEQLSSYEYGLLQVPIFGALIAGNLLLARLTSRRTVRSLIIMGGWPIMIGLLVAAAATVISSHAYLWMTAGLSIYAFGIGLANAGLVRLTLFASDMSKGTVSAAMGMLQMLIFTVGIEISKHAWLNGGNGQFNLFNLVNGILWLSLMVIFLKDKQMGNSHEG</sequence>
<comment type="function">
    <text evidence="1">Efflux pump driven by the proton motive force. Confers resistance to a broad spectrum of chemically unrelated drugs (By similarity).</text>
</comment>
<comment type="subunit">
    <text evidence="1">Monomer.</text>
</comment>
<comment type="subcellular location">
    <subcellularLocation>
        <location evidence="1">Cell inner membrane</location>
        <topology evidence="1">Multi-pass membrane protein</topology>
    </subcellularLocation>
</comment>
<comment type="similarity">
    <text evidence="3">Belongs to the major facilitator superfamily. MdfA family.</text>
</comment>
<comment type="sequence caution" evidence="3">
    <conflict type="frameshift">
        <sequence resource="EMBL-CDS" id="ABB65411"/>
    </conflict>
</comment>
<dbReference type="EMBL" id="CP000036">
    <property type="protein sequence ID" value="ABB65411.1"/>
    <property type="status" value="ALT_FRAME"/>
    <property type="molecule type" value="Genomic_DNA"/>
</dbReference>
<dbReference type="SMR" id="Q323U7"/>
<dbReference type="KEGG" id="sbo:SBO_0738"/>
<dbReference type="HOGENOM" id="CLU_001265_47_2_6"/>
<dbReference type="Proteomes" id="UP000007067">
    <property type="component" value="Chromosome"/>
</dbReference>
<dbReference type="GO" id="GO:0005886">
    <property type="term" value="C:plasma membrane"/>
    <property type="evidence" value="ECO:0007669"/>
    <property type="project" value="UniProtKB-SubCell"/>
</dbReference>
<dbReference type="GO" id="GO:0015385">
    <property type="term" value="F:sodium:proton antiporter activity"/>
    <property type="evidence" value="ECO:0007669"/>
    <property type="project" value="TreeGrafter"/>
</dbReference>
<dbReference type="GO" id="GO:0046677">
    <property type="term" value="P:response to antibiotic"/>
    <property type="evidence" value="ECO:0007669"/>
    <property type="project" value="UniProtKB-KW"/>
</dbReference>
<dbReference type="GO" id="GO:1990961">
    <property type="term" value="P:xenobiotic detoxification by transmembrane export across the plasma membrane"/>
    <property type="evidence" value="ECO:0007669"/>
    <property type="project" value="TreeGrafter"/>
</dbReference>
<dbReference type="CDD" id="cd17320">
    <property type="entry name" value="MFS_MdfA_MDR_like"/>
    <property type="match status" value="1"/>
</dbReference>
<dbReference type="FunFam" id="1.20.1720.10:FF:000008">
    <property type="entry name" value="Multidrug transporter MdfA"/>
    <property type="match status" value="1"/>
</dbReference>
<dbReference type="Gene3D" id="1.20.1720.10">
    <property type="entry name" value="Multidrug resistance protein D"/>
    <property type="match status" value="1"/>
</dbReference>
<dbReference type="InterPro" id="IPR011701">
    <property type="entry name" value="MFS"/>
</dbReference>
<dbReference type="InterPro" id="IPR020846">
    <property type="entry name" value="MFS_dom"/>
</dbReference>
<dbReference type="InterPro" id="IPR036259">
    <property type="entry name" value="MFS_trans_sf"/>
</dbReference>
<dbReference type="InterPro" id="IPR005829">
    <property type="entry name" value="Sugar_transporter_CS"/>
</dbReference>
<dbReference type="NCBIfam" id="NF011931">
    <property type="entry name" value="PRK15402.1"/>
    <property type="match status" value="1"/>
</dbReference>
<dbReference type="PANTHER" id="PTHR23502">
    <property type="entry name" value="MAJOR FACILITATOR SUPERFAMILY"/>
    <property type="match status" value="1"/>
</dbReference>
<dbReference type="PANTHER" id="PTHR23502:SF43">
    <property type="entry name" value="MULTIDRUG TRANSPORTER MDFA"/>
    <property type="match status" value="1"/>
</dbReference>
<dbReference type="Pfam" id="PF07690">
    <property type="entry name" value="MFS_1"/>
    <property type="match status" value="1"/>
</dbReference>
<dbReference type="SUPFAM" id="SSF103473">
    <property type="entry name" value="MFS general substrate transporter"/>
    <property type="match status" value="1"/>
</dbReference>
<dbReference type="PROSITE" id="PS50850">
    <property type="entry name" value="MFS"/>
    <property type="match status" value="1"/>
</dbReference>
<reference key="1">
    <citation type="journal article" date="2005" name="Nucleic Acids Res.">
        <title>Genome dynamics and diversity of Shigella species, the etiologic agents of bacillary dysentery.</title>
        <authorList>
            <person name="Yang F."/>
            <person name="Yang J."/>
            <person name="Zhang X."/>
            <person name="Chen L."/>
            <person name="Jiang Y."/>
            <person name="Yan Y."/>
            <person name="Tang X."/>
            <person name="Wang J."/>
            <person name="Xiong Z."/>
            <person name="Dong J."/>
            <person name="Xue Y."/>
            <person name="Zhu Y."/>
            <person name="Xu X."/>
            <person name="Sun L."/>
            <person name="Chen S."/>
            <person name="Nie H."/>
            <person name="Peng J."/>
            <person name="Xu J."/>
            <person name="Wang Y."/>
            <person name="Yuan Z."/>
            <person name="Wen Y."/>
            <person name="Yao Z."/>
            <person name="Shen Y."/>
            <person name="Qiang B."/>
            <person name="Hou Y."/>
            <person name="Yu J."/>
            <person name="Jin Q."/>
        </authorList>
    </citation>
    <scope>NUCLEOTIDE SEQUENCE [LARGE SCALE GENOMIC DNA]</scope>
    <source>
        <strain>Sb227</strain>
    </source>
</reference>
<protein>
    <recommendedName>
        <fullName>Multidrug transporter MdfA</fullName>
    </recommendedName>
</protein>
<gene>
    <name type="primary">mdfA</name>
    <name type="synonym">cmr</name>
    <name type="ordered locus">SBO_0738</name>
</gene>
<keyword id="KW-0046">Antibiotic resistance</keyword>
<keyword id="KW-0997">Cell inner membrane</keyword>
<keyword id="KW-1003">Cell membrane</keyword>
<keyword id="KW-0472">Membrane</keyword>
<keyword id="KW-0812">Transmembrane</keyword>
<keyword id="KW-1133">Transmembrane helix</keyword>
<keyword id="KW-0813">Transport</keyword>
<name>MDFA_SHIBS</name>
<accession>Q323U7</accession>